<gene>
    <name evidence="1" type="primary">upp</name>
    <name type="ordered locus">PA4646</name>
</gene>
<proteinExistence type="inferred from homology"/>
<protein>
    <recommendedName>
        <fullName evidence="1">Uracil phosphoribosyltransferase</fullName>
        <ecNumber evidence="1">2.4.2.9</ecNumber>
    </recommendedName>
    <alternativeName>
        <fullName evidence="1">UMP pyrophosphorylase</fullName>
    </alternativeName>
    <alternativeName>
        <fullName evidence="1">UPRTase</fullName>
    </alternativeName>
</protein>
<reference key="1">
    <citation type="journal article" date="2000" name="Nature">
        <title>Complete genome sequence of Pseudomonas aeruginosa PAO1, an opportunistic pathogen.</title>
        <authorList>
            <person name="Stover C.K."/>
            <person name="Pham X.-Q.T."/>
            <person name="Erwin A.L."/>
            <person name="Mizoguchi S.D."/>
            <person name="Warrener P."/>
            <person name="Hickey M.J."/>
            <person name="Brinkman F.S.L."/>
            <person name="Hufnagle W.O."/>
            <person name="Kowalik D.J."/>
            <person name="Lagrou M."/>
            <person name="Garber R.L."/>
            <person name="Goltry L."/>
            <person name="Tolentino E."/>
            <person name="Westbrock-Wadman S."/>
            <person name="Yuan Y."/>
            <person name="Brody L.L."/>
            <person name="Coulter S.N."/>
            <person name="Folger K.R."/>
            <person name="Kas A."/>
            <person name="Larbig K."/>
            <person name="Lim R.M."/>
            <person name="Smith K.A."/>
            <person name="Spencer D.H."/>
            <person name="Wong G.K.-S."/>
            <person name="Wu Z."/>
            <person name="Paulsen I.T."/>
            <person name="Reizer J."/>
            <person name="Saier M.H. Jr."/>
            <person name="Hancock R.E.W."/>
            <person name="Lory S."/>
            <person name="Olson M.V."/>
        </authorList>
    </citation>
    <scope>NUCLEOTIDE SEQUENCE [LARGE SCALE GENOMIC DNA]</scope>
    <source>
        <strain>ATCC 15692 / DSM 22644 / CIP 104116 / JCM 14847 / LMG 12228 / 1C / PRS 101 / PAO1</strain>
    </source>
</reference>
<comment type="function">
    <text evidence="1">Catalyzes the conversion of uracil and 5-phospho-alpha-D-ribose 1-diphosphate (PRPP) to UMP and diphosphate.</text>
</comment>
<comment type="catalytic activity">
    <reaction evidence="1">
        <text>UMP + diphosphate = 5-phospho-alpha-D-ribose 1-diphosphate + uracil</text>
        <dbReference type="Rhea" id="RHEA:13017"/>
        <dbReference type="ChEBI" id="CHEBI:17568"/>
        <dbReference type="ChEBI" id="CHEBI:33019"/>
        <dbReference type="ChEBI" id="CHEBI:57865"/>
        <dbReference type="ChEBI" id="CHEBI:58017"/>
        <dbReference type="EC" id="2.4.2.9"/>
    </reaction>
</comment>
<comment type="cofactor">
    <cofactor evidence="1">
        <name>Mg(2+)</name>
        <dbReference type="ChEBI" id="CHEBI:18420"/>
    </cofactor>
    <text evidence="1">Binds 1 Mg(2+) ion per subunit. The magnesium is bound as Mg-PRPP.</text>
</comment>
<comment type="activity regulation">
    <text evidence="1">Allosterically activated by GTP.</text>
</comment>
<comment type="pathway">
    <text evidence="1">Pyrimidine metabolism; UMP biosynthesis via salvage pathway; UMP from uracil: step 1/1.</text>
</comment>
<comment type="similarity">
    <text evidence="1">Belongs to the UPRTase family.</text>
</comment>
<dbReference type="EC" id="2.4.2.9" evidence="1"/>
<dbReference type="EMBL" id="AE004091">
    <property type="protein sequence ID" value="AAG08033.1"/>
    <property type="molecule type" value="Genomic_DNA"/>
</dbReference>
<dbReference type="PIR" id="D83066">
    <property type="entry name" value="D83066"/>
</dbReference>
<dbReference type="RefSeq" id="NP_253335.1">
    <property type="nucleotide sequence ID" value="NC_002516.2"/>
</dbReference>
<dbReference type="RefSeq" id="WP_003094968.1">
    <property type="nucleotide sequence ID" value="NZ_QZGE01000029.1"/>
</dbReference>
<dbReference type="SMR" id="Q9HVE6"/>
<dbReference type="FunCoup" id="Q9HVE6">
    <property type="interactions" value="685"/>
</dbReference>
<dbReference type="STRING" id="208964.PA4646"/>
<dbReference type="PaxDb" id="208964-PA4646"/>
<dbReference type="DNASU" id="881277"/>
<dbReference type="GeneID" id="881277"/>
<dbReference type="KEGG" id="pae:PA4646"/>
<dbReference type="PATRIC" id="fig|208964.12.peg.4868"/>
<dbReference type="PseudoCAP" id="PA4646"/>
<dbReference type="HOGENOM" id="CLU_067096_2_2_6"/>
<dbReference type="InParanoid" id="Q9HVE6"/>
<dbReference type="OrthoDB" id="9781675at2"/>
<dbReference type="PhylomeDB" id="Q9HVE6"/>
<dbReference type="BioCyc" id="PAER208964:G1FZ6-4742-MONOMER"/>
<dbReference type="UniPathway" id="UPA00574">
    <property type="reaction ID" value="UER00636"/>
</dbReference>
<dbReference type="Proteomes" id="UP000002438">
    <property type="component" value="Chromosome"/>
</dbReference>
<dbReference type="GO" id="GO:0005737">
    <property type="term" value="C:cytoplasm"/>
    <property type="evidence" value="ECO:0000318"/>
    <property type="project" value="GO_Central"/>
</dbReference>
<dbReference type="GO" id="GO:0005829">
    <property type="term" value="C:cytosol"/>
    <property type="evidence" value="ECO:0000318"/>
    <property type="project" value="GO_Central"/>
</dbReference>
<dbReference type="GO" id="GO:0005525">
    <property type="term" value="F:GTP binding"/>
    <property type="evidence" value="ECO:0007669"/>
    <property type="project" value="UniProtKB-KW"/>
</dbReference>
<dbReference type="GO" id="GO:0000287">
    <property type="term" value="F:magnesium ion binding"/>
    <property type="evidence" value="ECO:0007669"/>
    <property type="project" value="UniProtKB-UniRule"/>
</dbReference>
<dbReference type="GO" id="GO:0004845">
    <property type="term" value="F:uracil phosphoribosyltransferase activity"/>
    <property type="evidence" value="ECO:0000318"/>
    <property type="project" value="GO_Central"/>
</dbReference>
<dbReference type="GO" id="GO:0044206">
    <property type="term" value="P:UMP salvage"/>
    <property type="evidence" value="ECO:0007669"/>
    <property type="project" value="UniProtKB-UniRule"/>
</dbReference>
<dbReference type="GO" id="GO:0006223">
    <property type="term" value="P:uracil salvage"/>
    <property type="evidence" value="ECO:0007669"/>
    <property type="project" value="InterPro"/>
</dbReference>
<dbReference type="CDD" id="cd06223">
    <property type="entry name" value="PRTases_typeI"/>
    <property type="match status" value="1"/>
</dbReference>
<dbReference type="FunFam" id="3.40.50.2020:FF:000003">
    <property type="entry name" value="Uracil phosphoribosyltransferase"/>
    <property type="match status" value="1"/>
</dbReference>
<dbReference type="Gene3D" id="3.40.50.2020">
    <property type="match status" value="1"/>
</dbReference>
<dbReference type="HAMAP" id="MF_01218_B">
    <property type="entry name" value="Upp_B"/>
    <property type="match status" value="1"/>
</dbReference>
<dbReference type="InterPro" id="IPR000836">
    <property type="entry name" value="PRibTrfase_dom"/>
</dbReference>
<dbReference type="InterPro" id="IPR029057">
    <property type="entry name" value="PRTase-like"/>
</dbReference>
<dbReference type="InterPro" id="IPR034332">
    <property type="entry name" value="Upp_B"/>
</dbReference>
<dbReference type="InterPro" id="IPR050054">
    <property type="entry name" value="UPRTase/APRTase"/>
</dbReference>
<dbReference type="InterPro" id="IPR005765">
    <property type="entry name" value="Ura_phspho_trans"/>
</dbReference>
<dbReference type="NCBIfam" id="NF001097">
    <property type="entry name" value="PRK00129.1"/>
    <property type="match status" value="1"/>
</dbReference>
<dbReference type="NCBIfam" id="TIGR01091">
    <property type="entry name" value="upp"/>
    <property type="match status" value="1"/>
</dbReference>
<dbReference type="PANTHER" id="PTHR32315">
    <property type="entry name" value="ADENINE PHOSPHORIBOSYLTRANSFERASE"/>
    <property type="match status" value="1"/>
</dbReference>
<dbReference type="PANTHER" id="PTHR32315:SF4">
    <property type="entry name" value="URACIL PHOSPHORIBOSYLTRANSFERASE, CHLOROPLASTIC"/>
    <property type="match status" value="1"/>
</dbReference>
<dbReference type="Pfam" id="PF14681">
    <property type="entry name" value="UPRTase"/>
    <property type="match status" value="1"/>
</dbReference>
<dbReference type="SUPFAM" id="SSF53271">
    <property type="entry name" value="PRTase-like"/>
    <property type="match status" value="1"/>
</dbReference>
<sequence>MPVHEIRHPLIRHKLGLMRRADISTKNFRELAQEVGALLTYEATKDLPLEQYEIPGWAGPVTVEKISGKKITVVPILRAGIGMLDGVLSLIPGAKVSAVGVARNEETLEARTYLEKLAPDIAERRSLIIDPMLATGGSMVATIDLLKKAGSKEIRAMVLVAAPEGIEAVRKAHPDVIIYTASIDEKLDENGYIIPGLGDAGDKIFGTKQKEA</sequence>
<organism>
    <name type="scientific">Pseudomonas aeruginosa (strain ATCC 15692 / DSM 22644 / CIP 104116 / JCM 14847 / LMG 12228 / 1C / PRS 101 / PAO1)</name>
    <dbReference type="NCBI Taxonomy" id="208964"/>
    <lineage>
        <taxon>Bacteria</taxon>
        <taxon>Pseudomonadati</taxon>
        <taxon>Pseudomonadota</taxon>
        <taxon>Gammaproteobacteria</taxon>
        <taxon>Pseudomonadales</taxon>
        <taxon>Pseudomonadaceae</taxon>
        <taxon>Pseudomonas</taxon>
    </lineage>
</organism>
<evidence type="ECO:0000255" key="1">
    <source>
        <dbReference type="HAMAP-Rule" id="MF_01218"/>
    </source>
</evidence>
<accession>Q9HVE6</accession>
<name>UPP_PSEAE</name>
<feature type="chain" id="PRO_0000120869" description="Uracil phosphoribosyltransferase">
    <location>
        <begin position="1"/>
        <end position="212"/>
    </location>
</feature>
<feature type="binding site" evidence="1">
    <location>
        <position position="78"/>
    </location>
    <ligand>
        <name>5-phospho-alpha-D-ribose 1-diphosphate</name>
        <dbReference type="ChEBI" id="CHEBI:58017"/>
    </ligand>
</feature>
<feature type="binding site" evidence="1">
    <location>
        <position position="103"/>
    </location>
    <ligand>
        <name>5-phospho-alpha-D-ribose 1-diphosphate</name>
        <dbReference type="ChEBI" id="CHEBI:58017"/>
    </ligand>
</feature>
<feature type="binding site" evidence="1">
    <location>
        <begin position="130"/>
        <end position="138"/>
    </location>
    <ligand>
        <name>5-phospho-alpha-D-ribose 1-diphosphate</name>
        <dbReference type="ChEBI" id="CHEBI:58017"/>
    </ligand>
</feature>
<feature type="binding site" evidence="1">
    <location>
        <position position="193"/>
    </location>
    <ligand>
        <name>uracil</name>
        <dbReference type="ChEBI" id="CHEBI:17568"/>
    </ligand>
</feature>
<feature type="binding site" evidence="1">
    <location>
        <begin position="198"/>
        <end position="200"/>
    </location>
    <ligand>
        <name>uracil</name>
        <dbReference type="ChEBI" id="CHEBI:17568"/>
    </ligand>
</feature>
<feature type="binding site" evidence="1">
    <location>
        <position position="199"/>
    </location>
    <ligand>
        <name>5-phospho-alpha-D-ribose 1-diphosphate</name>
        <dbReference type="ChEBI" id="CHEBI:58017"/>
    </ligand>
</feature>
<keyword id="KW-0021">Allosteric enzyme</keyword>
<keyword id="KW-0328">Glycosyltransferase</keyword>
<keyword id="KW-0342">GTP-binding</keyword>
<keyword id="KW-0460">Magnesium</keyword>
<keyword id="KW-0547">Nucleotide-binding</keyword>
<keyword id="KW-1185">Reference proteome</keyword>
<keyword id="KW-0808">Transferase</keyword>